<dbReference type="EC" id="3.1.-.-" evidence="1"/>
<dbReference type="EMBL" id="CH933806">
    <property type="protein sequence ID" value="EDW13657.1"/>
    <property type="molecule type" value="Genomic_DNA"/>
</dbReference>
<dbReference type="SMR" id="B4KBJ0"/>
<dbReference type="FunCoup" id="B4KBJ0">
    <property type="interactions" value="812"/>
</dbReference>
<dbReference type="GeneID" id="6572042"/>
<dbReference type="KEGG" id="dmo:Dmoj_GI23768"/>
<dbReference type="eggNOG" id="KOG3005">
    <property type="taxonomic scope" value="Eukaryota"/>
</dbReference>
<dbReference type="HOGENOM" id="CLU_030739_0_0_1"/>
<dbReference type="InParanoid" id="B4KBJ0"/>
<dbReference type="OMA" id="HNRGCDF"/>
<dbReference type="OrthoDB" id="24645at2759"/>
<dbReference type="PhylomeDB" id="B4KBJ0"/>
<dbReference type="Proteomes" id="UP000009192">
    <property type="component" value="Unassembled WGS sequence"/>
</dbReference>
<dbReference type="GO" id="GO:0033557">
    <property type="term" value="C:Slx1-Slx4 complex"/>
    <property type="evidence" value="ECO:0007669"/>
    <property type="project" value="UniProtKB-UniRule"/>
</dbReference>
<dbReference type="GO" id="GO:0017108">
    <property type="term" value="F:5'-flap endonuclease activity"/>
    <property type="evidence" value="ECO:0007669"/>
    <property type="project" value="InterPro"/>
</dbReference>
<dbReference type="GO" id="GO:0008821">
    <property type="term" value="F:crossover junction DNA endonuclease activity"/>
    <property type="evidence" value="ECO:0007669"/>
    <property type="project" value="TreeGrafter"/>
</dbReference>
<dbReference type="GO" id="GO:0008270">
    <property type="term" value="F:zinc ion binding"/>
    <property type="evidence" value="ECO:0007669"/>
    <property type="project" value="UniProtKB-KW"/>
</dbReference>
<dbReference type="GO" id="GO:0000724">
    <property type="term" value="P:double-strand break repair via homologous recombination"/>
    <property type="evidence" value="ECO:0007669"/>
    <property type="project" value="TreeGrafter"/>
</dbReference>
<dbReference type="CDD" id="cd10455">
    <property type="entry name" value="GIY-YIG_SLX1"/>
    <property type="match status" value="1"/>
</dbReference>
<dbReference type="FunFam" id="3.40.1440.10:FF:000012">
    <property type="entry name" value="Structure-specific endonuclease subunit SLX1 homolog"/>
    <property type="match status" value="1"/>
</dbReference>
<dbReference type="Gene3D" id="3.40.1440.10">
    <property type="entry name" value="GIY-YIG endonuclease"/>
    <property type="match status" value="1"/>
</dbReference>
<dbReference type="Gene3D" id="3.30.40.10">
    <property type="entry name" value="Zinc/RING finger domain, C3HC4 (zinc finger)"/>
    <property type="match status" value="1"/>
</dbReference>
<dbReference type="HAMAP" id="MF_03100">
    <property type="entry name" value="Endonuc_su_Slx1"/>
    <property type="match status" value="1"/>
</dbReference>
<dbReference type="InterPro" id="IPR000305">
    <property type="entry name" value="GIY-YIG_endonuc"/>
</dbReference>
<dbReference type="InterPro" id="IPR035901">
    <property type="entry name" value="GIY-YIG_endonuc_sf"/>
</dbReference>
<dbReference type="InterPro" id="IPR027520">
    <property type="entry name" value="Slx1"/>
</dbReference>
<dbReference type="InterPro" id="IPR048749">
    <property type="entry name" value="SLX1_C"/>
</dbReference>
<dbReference type="InterPro" id="IPR050381">
    <property type="entry name" value="SLX1_endonuclease"/>
</dbReference>
<dbReference type="InterPro" id="IPR013083">
    <property type="entry name" value="Znf_RING/FYVE/PHD"/>
</dbReference>
<dbReference type="PANTHER" id="PTHR20208">
    <property type="entry name" value="STRUCTURE-SPECIFIC ENDONUCLEASE SUBUNIT SLX1"/>
    <property type="match status" value="1"/>
</dbReference>
<dbReference type="PANTHER" id="PTHR20208:SF10">
    <property type="entry name" value="STRUCTURE-SPECIFIC ENDONUCLEASE SUBUNIT SLX1"/>
    <property type="match status" value="1"/>
</dbReference>
<dbReference type="Pfam" id="PF01541">
    <property type="entry name" value="GIY-YIG"/>
    <property type="match status" value="1"/>
</dbReference>
<dbReference type="Pfam" id="PF21202">
    <property type="entry name" value="SLX1_C"/>
    <property type="match status" value="1"/>
</dbReference>
<dbReference type="SMART" id="SM00465">
    <property type="entry name" value="GIYc"/>
    <property type="match status" value="1"/>
</dbReference>
<dbReference type="SUPFAM" id="SSF82771">
    <property type="entry name" value="GIY-YIG endonuclease"/>
    <property type="match status" value="1"/>
</dbReference>
<dbReference type="PROSITE" id="PS50164">
    <property type="entry name" value="GIY_YIG"/>
    <property type="match status" value="1"/>
</dbReference>
<gene>
    <name type="primary">slx1</name>
    <name type="ORF">GI23768</name>
</gene>
<sequence length="303" mass="34843">MLILRLTLAGDREALAQKGHFYGVYLLCSQSVDVRHRGKCYVGFTVNPKRRIRQHNRGSSFGGAKKTSKKGPWQMVMIVHGFPNKIVALQFEWAWQQPTLSTRLKIFDDLRRKLPRETHFDYNFRIVNRMLGVGPWHRLPLTVRWLETDYEREFQLPLPRHMRIVSGKVAITTSQRALAVKRTAAAAAATASWSSECHLCMQRIEHPERSRFSCLNASCCLSCHMLCLASYLLDDQPGQYLPIVGNCPLCETPLVWAELLERKRFEQGVQIQGEDENEEEDRDELSDCPDVDSDVEHICELSD</sequence>
<feature type="chain" id="PRO_0000383757" description="Structure-specific endonuclease subunit SLX1 homolog">
    <location>
        <begin position="1"/>
        <end position="303"/>
    </location>
</feature>
<feature type="domain" description="GIY-YIG" evidence="1">
    <location>
        <begin position="20"/>
        <end position="106"/>
    </location>
</feature>
<feature type="zinc finger region" description="SLX1-type" evidence="1">
    <location>
        <begin position="197"/>
        <end position="250"/>
    </location>
</feature>
<feature type="region of interest" description="Disordered" evidence="2">
    <location>
        <begin position="270"/>
        <end position="303"/>
    </location>
</feature>
<feature type="compositionally biased region" description="Acidic residues" evidence="2">
    <location>
        <begin position="273"/>
        <end position="293"/>
    </location>
</feature>
<feature type="compositionally biased region" description="Basic and acidic residues" evidence="2">
    <location>
        <begin position="294"/>
        <end position="303"/>
    </location>
</feature>
<evidence type="ECO:0000255" key="1">
    <source>
        <dbReference type="HAMAP-Rule" id="MF_03100"/>
    </source>
</evidence>
<evidence type="ECO:0000256" key="2">
    <source>
        <dbReference type="SAM" id="MobiDB-lite"/>
    </source>
</evidence>
<accession>B4KBJ0</accession>
<reference key="1">
    <citation type="journal article" date="2007" name="Nature">
        <title>Evolution of genes and genomes on the Drosophila phylogeny.</title>
        <authorList>
            <consortium name="Drosophila 12 genomes consortium"/>
        </authorList>
    </citation>
    <scope>NUCLEOTIDE SEQUENCE [LARGE SCALE GENOMIC DNA]</scope>
    <source>
        <strain>Tucson 15081-1352.22</strain>
    </source>
</reference>
<keyword id="KW-0227">DNA damage</keyword>
<keyword id="KW-0233">DNA recombination</keyword>
<keyword id="KW-0234">DNA repair</keyword>
<keyword id="KW-0255">Endonuclease</keyword>
<keyword id="KW-0378">Hydrolase</keyword>
<keyword id="KW-0479">Metal-binding</keyword>
<keyword id="KW-0540">Nuclease</keyword>
<keyword id="KW-0539">Nucleus</keyword>
<keyword id="KW-1185">Reference proteome</keyword>
<keyword id="KW-0862">Zinc</keyword>
<keyword id="KW-0863">Zinc-finger</keyword>
<proteinExistence type="inferred from homology"/>
<organism>
    <name type="scientific">Drosophila mojavensis</name>
    <name type="common">Fruit fly</name>
    <dbReference type="NCBI Taxonomy" id="7230"/>
    <lineage>
        <taxon>Eukaryota</taxon>
        <taxon>Metazoa</taxon>
        <taxon>Ecdysozoa</taxon>
        <taxon>Arthropoda</taxon>
        <taxon>Hexapoda</taxon>
        <taxon>Insecta</taxon>
        <taxon>Pterygota</taxon>
        <taxon>Neoptera</taxon>
        <taxon>Endopterygota</taxon>
        <taxon>Diptera</taxon>
        <taxon>Brachycera</taxon>
        <taxon>Muscomorpha</taxon>
        <taxon>Ephydroidea</taxon>
        <taxon>Drosophilidae</taxon>
        <taxon>Drosophila</taxon>
    </lineage>
</organism>
<name>SLX1_DROMO</name>
<protein>
    <recommendedName>
        <fullName evidence="1">Structure-specific endonuclease subunit SLX1 homolog</fullName>
        <ecNumber evidence="1">3.1.-.-</ecNumber>
    </recommendedName>
</protein>
<comment type="function">
    <text evidence="1">Catalytic subunit of a heterodimeric structure-specific endonuclease that resolves DNA secondary structures generated during DNA repair and recombination. Has endonuclease activity towards branched DNA substrates, introducing single-strand cuts in duplex DNA close to junctions with ss-DNA.</text>
</comment>
<comment type="cofactor">
    <cofactor evidence="1">
        <name>a divalent metal cation</name>
        <dbReference type="ChEBI" id="CHEBI:60240"/>
    </cofactor>
</comment>
<comment type="subunit">
    <text evidence="1">Forms a heterodimer with mus312/SLX4.</text>
</comment>
<comment type="subcellular location">
    <subcellularLocation>
        <location evidence="1">Nucleus</location>
    </subcellularLocation>
</comment>
<comment type="similarity">
    <text evidence="1">Belongs to the SLX1 family.</text>
</comment>